<proteinExistence type="inferred from homology"/>
<sequence length="327" mass="36612">MEAIKGSDVNVPDAVFAWMLDGRGGVKPLENTDVIDEAHPCWLHLNYVHHDSAQWLATTPLLPNNVRDALAGESTRPRVSRLGEGTLITLRCINGSTDERPDQLVAMRVYMDGRLIVSTRQRKVLALDDVVSDLEEGTGPTDCGGWLVDVCDALTDHSSEFIEQLHDKIIDLEDNLLDQQIPPRGFLALLRKQLIVMRRYMAPQRDVYARLASERLPWMSDDQRRRMQDIADRLGRGLDEIDACIARTGVMADEIAQVMQENLARRTYTMSLMAMVFLPSTFLTGLFGVNLGGIPGGGWQFGFSIFCILLVVLIGGVALWLHRSKWL</sequence>
<gene>
    <name evidence="1" type="primary">zntB</name>
    <name type="ordered locus">EcE24377A_1556</name>
</gene>
<name>ZNTB_ECO24</name>
<protein>
    <recommendedName>
        <fullName evidence="1">Zinc transport protein ZntB</fullName>
    </recommendedName>
</protein>
<feature type="chain" id="PRO_1000069068" description="Zinc transport protein ZntB">
    <location>
        <begin position="1"/>
        <end position="327"/>
    </location>
</feature>
<feature type="topological domain" description="Cytoplasmic" evidence="1">
    <location>
        <begin position="1"/>
        <end position="273"/>
    </location>
</feature>
<feature type="transmembrane region" description="Helical" evidence="1">
    <location>
        <begin position="274"/>
        <end position="294"/>
    </location>
</feature>
<feature type="topological domain" description="Periplasmic" evidence="1">
    <location>
        <begin position="295"/>
        <end position="300"/>
    </location>
</feature>
<feature type="transmembrane region" description="Helical" evidence="1">
    <location>
        <begin position="301"/>
        <end position="321"/>
    </location>
</feature>
<feature type="topological domain" description="Cytoplasmic" evidence="1">
    <location>
        <begin position="322"/>
        <end position="327"/>
    </location>
</feature>
<dbReference type="EMBL" id="CP000800">
    <property type="protein sequence ID" value="ABV19500.1"/>
    <property type="molecule type" value="Genomic_DNA"/>
</dbReference>
<dbReference type="RefSeq" id="WP_000387388.1">
    <property type="nucleotide sequence ID" value="NC_009801.1"/>
</dbReference>
<dbReference type="SMR" id="A7ZLH2"/>
<dbReference type="GeneID" id="93775479"/>
<dbReference type="KEGG" id="ecw:EcE24377A_1556"/>
<dbReference type="HOGENOM" id="CLU_007127_2_0_6"/>
<dbReference type="Proteomes" id="UP000001122">
    <property type="component" value="Chromosome"/>
</dbReference>
<dbReference type="GO" id="GO:0005886">
    <property type="term" value="C:plasma membrane"/>
    <property type="evidence" value="ECO:0007669"/>
    <property type="project" value="UniProtKB-SubCell"/>
</dbReference>
<dbReference type="GO" id="GO:0050897">
    <property type="term" value="F:cobalt ion binding"/>
    <property type="evidence" value="ECO:0007669"/>
    <property type="project" value="TreeGrafter"/>
</dbReference>
<dbReference type="GO" id="GO:0015087">
    <property type="term" value="F:cobalt ion transmembrane transporter activity"/>
    <property type="evidence" value="ECO:0007669"/>
    <property type="project" value="TreeGrafter"/>
</dbReference>
<dbReference type="GO" id="GO:0000287">
    <property type="term" value="F:magnesium ion binding"/>
    <property type="evidence" value="ECO:0007669"/>
    <property type="project" value="TreeGrafter"/>
</dbReference>
<dbReference type="GO" id="GO:0015095">
    <property type="term" value="F:magnesium ion transmembrane transporter activity"/>
    <property type="evidence" value="ECO:0007669"/>
    <property type="project" value="TreeGrafter"/>
</dbReference>
<dbReference type="GO" id="GO:0005385">
    <property type="term" value="F:zinc ion transmembrane transporter activity"/>
    <property type="evidence" value="ECO:0007669"/>
    <property type="project" value="UniProtKB-UniRule"/>
</dbReference>
<dbReference type="CDD" id="cd12833">
    <property type="entry name" value="ZntB-like_1"/>
    <property type="match status" value="1"/>
</dbReference>
<dbReference type="FunFam" id="1.20.58.340:FF:000002">
    <property type="entry name" value="Zinc transport protein ZntB"/>
    <property type="match status" value="1"/>
</dbReference>
<dbReference type="FunFam" id="1.20.58.340:FF:000003">
    <property type="entry name" value="Zinc transport protein ZntB"/>
    <property type="match status" value="1"/>
</dbReference>
<dbReference type="FunFam" id="3.30.460.20:FF:000001">
    <property type="entry name" value="Zinc transport protein ZntB"/>
    <property type="match status" value="1"/>
</dbReference>
<dbReference type="Gene3D" id="3.30.460.20">
    <property type="entry name" value="CorA soluble domain-like"/>
    <property type="match status" value="1"/>
</dbReference>
<dbReference type="Gene3D" id="1.20.58.340">
    <property type="entry name" value="Magnesium transport protein CorA, transmembrane region"/>
    <property type="match status" value="2"/>
</dbReference>
<dbReference type="HAMAP" id="MF_01565">
    <property type="entry name" value="ZntB"/>
    <property type="match status" value="1"/>
</dbReference>
<dbReference type="InterPro" id="IPR045861">
    <property type="entry name" value="CorA_cytoplasmic_dom"/>
</dbReference>
<dbReference type="InterPro" id="IPR045863">
    <property type="entry name" value="CorA_TM1_TM2"/>
</dbReference>
<dbReference type="InterPro" id="IPR002523">
    <property type="entry name" value="MgTranspt_CorA/ZnTranspt_ZntB"/>
</dbReference>
<dbReference type="InterPro" id="IPR023714">
    <property type="entry name" value="Zn_transp_ZntB"/>
</dbReference>
<dbReference type="NCBIfam" id="NF007092">
    <property type="entry name" value="PRK09546.1"/>
    <property type="match status" value="1"/>
</dbReference>
<dbReference type="PANTHER" id="PTHR46494">
    <property type="entry name" value="CORA FAMILY METAL ION TRANSPORTER (EUROFUNG)"/>
    <property type="match status" value="1"/>
</dbReference>
<dbReference type="PANTHER" id="PTHR46494:SF3">
    <property type="entry name" value="ZINC TRANSPORT PROTEIN ZNTB"/>
    <property type="match status" value="1"/>
</dbReference>
<dbReference type="Pfam" id="PF01544">
    <property type="entry name" value="CorA"/>
    <property type="match status" value="1"/>
</dbReference>
<dbReference type="SUPFAM" id="SSF143865">
    <property type="entry name" value="CorA soluble domain-like"/>
    <property type="match status" value="1"/>
</dbReference>
<dbReference type="SUPFAM" id="SSF144083">
    <property type="entry name" value="Magnesium transport protein CorA, transmembrane region"/>
    <property type="match status" value="1"/>
</dbReference>
<organism>
    <name type="scientific">Escherichia coli O139:H28 (strain E24377A / ETEC)</name>
    <dbReference type="NCBI Taxonomy" id="331111"/>
    <lineage>
        <taxon>Bacteria</taxon>
        <taxon>Pseudomonadati</taxon>
        <taxon>Pseudomonadota</taxon>
        <taxon>Gammaproteobacteria</taxon>
        <taxon>Enterobacterales</taxon>
        <taxon>Enterobacteriaceae</taxon>
        <taxon>Escherichia</taxon>
    </lineage>
</organism>
<reference key="1">
    <citation type="journal article" date="2008" name="J. Bacteriol.">
        <title>The pangenome structure of Escherichia coli: comparative genomic analysis of E. coli commensal and pathogenic isolates.</title>
        <authorList>
            <person name="Rasko D.A."/>
            <person name="Rosovitz M.J."/>
            <person name="Myers G.S.A."/>
            <person name="Mongodin E.F."/>
            <person name="Fricke W.F."/>
            <person name="Gajer P."/>
            <person name="Crabtree J."/>
            <person name="Sebaihia M."/>
            <person name="Thomson N.R."/>
            <person name="Chaudhuri R."/>
            <person name="Henderson I.R."/>
            <person name="Sperandio V."/>
            <person name="Ravel J."/>
        </authorList>
    </citation>
    <scope>NUCLEOTIDE SEQUENCE [LARGE SCALE GENOMIC DNA]</scope>
    <source>
        <strain>E24377A / ETEC</strain>
    </source>
</reference>
<accession>A7ZLH2</accession>
<comment type="function">
    <text evidence="1">Zinc transporter. Acts as a Zn(2+):proton symporter, which likely mediates zinc ion uptake.</text>
</comment>
<comment type="catalytic activity">
    <reaction evidence="1">
        <text>Zn(2+)(out) + H(+)(out) = Zn(2+)(in) + H(+)(in)</text>
        <dbReference type="Rhea" id="RHEA:71195"/>
        <dbReference type="ChEBI" id="CHEBI:15378"/>
        <dbReference type="ChEBI" id="CHEBI:29105"/>
    </reaction>
    <physiologicalReaction direction="left-to-right" evidence="1">
        <dbReference type="Rhea" id="RHEA:71196"/>
    </physiologicalReaction>
</comment>
<comment type="subcellular location">
    <subcellularLocation>
        <location evidence="1">Cell inner membrane</location>
        <topology evidence="1">Multi-pass membrane protein</topology>
    </subcellularLocation>
</comment>
<comment type="similarity">
    <text evidence="1">Belongs to the CorA metal ion transporter (MIT) (TC 1.A.35) family.</text>
</comment>
<evidence type="ECO:0000255" key="1">
    <source>
        <dbReference type="HAMAP-Rule" id="MF_01565"/>
    </source>
</evidence>
<keyword id="KW-0997">Cell inner membrane</keyword>
<keyword id="KW-1003">Cell membrane</keyword>
<keyword id="KW-0406">Ion transport</keyword>
<keyword id="KW-0472">Membrane</keyword>
<keyword id="KW-1185">Reference proteome</keyword>
<keyword id="KW-0812">Transmembrane</keyword>
<keyword id="KW-1133">Transmembrane helix</keyword>
<keyword id="KW-0813">Transport</keyword>
<keyword id="KW-0862">Zinc</keyword>